<proteinExistence type="inferred from homology"/>
<keyword id="KW-1185">Reference proteome</keyword>
<keyword id="KW-0687">Ribonucleoprotein</keyword>
<keyword id="KW-0689">Ribosomal protein</keyword>
<keyword id="KW-0694">RNA-binding</keyword>
<keyword id="KW-0699">rRNA-binding</keyword>
<sequence>MGQKIHPTGFRLAVTRNWSSRWYADDKDFGGMLAEDIRVREYLKKKLKSASVGRVVIERPAKNARITVYSARPGVVIGKRGEDIESLKADLQRLMGVPVHVNIEEIRKPETDAQLIADSISQQLEKRIMFRRAMKRAMQNAMRLGAQGIKIMSSGRLNGIEIARTEWYREGRVPLHTLKANIDYGTSEAHTTYGVIGIKVWVYKGDMLANGELPVETAAPREEERRPRRAPRGDRPDGARNGRPGGGRGRAPRKADAAPAPEGE</sequence>
<organism>
    <name type="scientific">Bordetella avium (strain 197N)</name>
    <dbReference type="NCBI Taxonomy" id="360910"/>
    <lineage>
        <taxon>Bacteria</taxon>
        <taxon>Pseudomonadati</taxon>
        <taxon>Pseudomonadota</taxon>
        <taxon>Betaproteobacteria</taxon>
        <taxon>Burkholderiales</taxon>
        <taxon>Alcaligenaceae</taxon>
        <taxon>Bordetella</taxon>
    </lineage>
</organism>
<protein>
    <recommendedName>
        <fullName evidence="1">Small ribosomal subunit protein uS3</fullName>
    </recommendedName>
    <alternativeName>
        <fullName evidence="3">30S ribosomal protein S3</fullName>
    </alternativeName>
</protein>
<accession>Q2L2C0</accession>
<comment type="function">
    <text evidence="1">Binds the lower part of the 30S subunit head. Binds mRNA in the 70S ribosome, positioning it for translation.</text>
</comment>
<comment type="subunit">
    <text evidence="1">Part of the 30S ribosomal subunit. Forms a tight complex with proteins S10 and S14.</text>
</comment>
<comment type="similarity">
    <text evidence="1">Belongs to the universal ribosomal protein uS3 family.</text>
</comment>
<evidence type="ECO:0000255" key="1">
    <source>
        <dbReference type="HAMAP-Rule" id="MF_01309"/>
    </source>
</evidence>
<evidence type="ECO:0000256" key="2">
    <source>
        <dbReference type="SAM" id="MobiDB-lite"/>
    </source>
</evidence>
<evidence type="ECO:0000305" key="3"/>
<feature type="chain" id="PRO_0000293758" description="Small ribosomal subunit protein uS3">
    <location>
        <begin position="1"/>
        <end position="264"/>
    </location>
</feature>
<feature type="domain" description="KH type-2" evidence="1">
    <location>
        <begin position="39"/>
        <end position="107"/>
    </location>
</feature>
<feature type="region of interest" description="Disordered" evidence="2">
    <location>
        <begin position="214"/>
        <end position="264"/>
    </location>
</feature>
<feature type="compositionally biased region" description="Basic and acidic residues" evidence="2">
    <location>
        <begin position="219"/>
        <end position="240"/>
    </location>
</feature>
<gene>
    <name evidence="1" type="primary">rpsC</name>
    <name type="ordered locus">BAV0031</name>
</gene>
<name>RS3_BORA1</name>
<dbReference type="EMBL" id="AM167904">
    <property type="protein sequence ID" value="CAJ47615.1"/>
    <property type="molecule type" value="Genomic_DNA"/>
</dbReference>
<dbReference type="RefSeq" id="WP_012415738.1">
    <property type="nucleotide sequence ID" value="NC_010645.1"/>
</dbReference>
<dbReference type="SMR" id="Q2L2C0"/>
<dbReference type="STRING" id="360910.BAV0031"/>
<dbReference type="GeneID" id="92936724"/>
<dbReference type="KEGG" id="bav:BAV0031"/>
<dbReference type="eggNOG" id="COG0092">
    <property type="taxonomic scope" value="Bacteria"/>
</dbReference>
<dbReference type="HOGENOM" id="CLU_058591_0_2_4"/>
<dbReference type="OrthoDB" id="9806396at2"/>
<dbReference type="Proteomes" id="UP000001977">
    <property type="component" value="Chromosome"/>
</dbReference>
<dbReference type="GO" id="GO:0022627">
    <property type="term" value="C:cytosolic small ribosomal subunit"/>
    <property type="evidence" value="ECO:0007669"/>
    <property type="project" value="TreeGrafter"/>
</dbReference>
<dbReference type="GO" id="GO:0003729">
    <property type="term" value="F:mRNA binding"/>
    <property type="evidence" value="ECO:0007669"/>
    <property type="project" value="UniProtKB-UniRule"/>
</dbReference>
<dbReference type="GO" id="GO:0019843">
    <property type="term" value="F:rRNA binding"/>
    <property type="evidence" value="ECO:0007669"/>
    <property type="project" value="UniProtKB-UniRule"/>
</dbReference>
<dbReference type="GO" id="GO:0003735">
    <property type="term" value="F:structural constituent of ribosome"/>
    <property type="evidence" value="ECO:0007669"/>
    <property type="project" value="InterPro"/>
</dbReference>
<dbReference type="GO" id="GO:0006412">
    <property type="term" value="P:translation"/>
    <property type="evidence" value="ECO:0007669"/>
    <property type="project" value="UniProtKB-UniRule"/>
</dbReference>
<dbReference type="CDD" id="cd02412">
    <property type="entry name" value="KH-II_30S_S3"/>
    <property type="match status" value="1"/>
</dbReference>
<dbReference type="FunFam" id="3.30.1140.32:FF:000006">
    <property type="entry name" value="30S ribosomal protein S3"/>
    <property type="match status" value="1"/>
</dbReference>
<dbReference type="FunFam" id="3.30.300.20:FF:000001">
    <property type="entry name" value="30S ribosomal protein S3"/>
    <property type="match status" value="1"/>
</dbReference>
<dbReference type="Gene3D" id="3.30.300.20">
    <property type="match status" value="1"/>
</dbReference>
<dbReference type="Gene3D" id="3.30.1140.32">
    <property type="entry name" value="Ribosomal protein S3, C-terminal domain"/>
    <property type="match status" value="1"/>
</dbReference>
<dbReference type="HAMAP" id="MF_01309_B">
    <property type="entry name" value="Ribosomal_uS3_B"/>
    <property type="match status" value="1"/>
</dbReference>
<dbReference type="InterPro" id="IPR004087">
    <property type="entry name" value="KH_dom"/>
</dbReference>
<dbReference type="InterPro" id="IPR015946">
    <property type="entry name" value="KH_dom-like_a/b"/>
</dbReference>
<dbReference type="InterPro" id="IPR004044">
    <property type="entry name" value="KH_dom_type_2"/>
</dbReference>
<dbReference type="InterPro" id="IPR009019">
    <property type="entry name" value="KH_sf_prok-type"/>
</dbReference>
<dbReference type="InterPro" id="IPR036419">
    <property type="entry name" value="Ribosomal_S3_C_sf"/>
</dbReference>
<dbReference type="InterPro" id="IPR005704">
    <property type="entry name" value="Ribosomal_uS3_bac-typ"/>
</dbReference>
<dbReference type="InterPro" id="IPR001351">
    <property type="entry name" value="Ribosomal_uS3_C"/>
</dbReference>
<dbReference type="InterPro" id="IPR018280">
    <property type="entry name" value="Ribosomal_uS3_CS"/>
</dbReference>
<dbReference type="NCBIfam" id="TIGR01009">
    <property type="entry name" value="rpsC_bact"/>
    <property type="match status" value="1"/>
</dbReference>
<dbReference type="PANTHER" id="PTHR11760">
    <property type="entry name" value="30S/40S RIBOSOMAL PROTEIN S3"/>
    <property type="match status" value="1"/>
</dbReference>
<dbReference type="PANTHER" id="PTHR11760:SF19">
    <property type="entry name" value="SMALL RIBOSOMAL SUBUNIT PROTEIN US3C"/>
    <property type="match status" value="1"/>
</dbReference>
<dbReference type="Pfam" id="PF07650">
    <property type="entry name" value="KH_2"/>
    <property type="match status" value="1"/>
</dbReference>
<dbReference type="Pfam" id="PF00189">
    <property type="entry name" value="Ribosomal_S3_C"/>
    <property type="match status" value="1"/>
</dbReference>
<dbReference type="SMART" id="SM00322">
    <property type="entry name" value="KH"/>
    <property type="match status" value="1"/>
</dbReference>
<dbReference type="SUPFAM" id="SSF54814">
    <property type="entry name" value="Prokaryotic type KH domain (KH-domain type II)"/>
    <property type="match status" value="1"/>
</dbReference>
<dbReference type="SUPFAM" id="SSF54821">
    <property type="entry name" value="Ribosomal protein S3 C-terminal domain"/>
    <property type="match status" value="1"/>
</dbReference>
<dbReference type="PROSITE" id="PS50823">
    <property type="entry name" value="KH_TYPE_2"/>
    <property type="match status" value="1"/>
</dbReference>
<dbReference type="PROSITE" id="PS00548">
    <property type="entry name" value="RIBOSOMAL_S3"/>
    <property type="match status" value="1"/>
</dbReference>
<reference key="1">
    <citation type="journal article" date="2006" name="J. Bacteriol.">
        <title>Comparison of the genome sequence of the poultry pathogen Bordetella avium with those of B. bronchiseptica, B. pertussis, and B. parapertussis reveals extensive diversity in surface structures associated with host interaction.</title>
        <authorList>
            <person name="Sebaihia M."/>
            <person name="Preston A."/>
            <person name="Maskell D.J."/>
            <person name="Kuzmiak H."/>
            <person name="Connell T.D."/>
            <person name="King N.D."/>
            <person name="Orndorff P.E."/>
            <person name="Miyamoto D.M."/>
            <person name="Thomson N.R."/>
            <person name="Harris D."/>
            <person name="Goble A."/>
            <person name="Lord A."/>
            <person name="Murphy L."/>
            <person name="Quail M.A."/>
            <person name="Rutter S."/>
            <person name="Squares R."/>
            <person name="Squares S."/>
            <person name="Woodward J."/>
            <person name="Parkhill J."/>
            <person name="Temple L.M."/>
        </authorList>
    </citation>
    <scope>NUCLEOTIDE SEQUENCE [LARGE SCALE GENOMIC DNA]</scope>
    <source>
        <strain>197N</strain>
    </source>
</reference>